<reference key="1">
    <citation type="journal article" date="2003" name="Nature">
        <title>The genome sequence of Bacillus anthracis Ames and comparison to closely related bacteria.</title>
        <authorList>
            <person name="Read T.D."/>
            <person name="Peterson S.N."/>
            <person name="Tourasse N.J."/>
            <person name="Baillie L.W."/>
            <person name="Paulsen I.T."/>
            <person name="Nelson K.E."/>
            <person name="Tettelin H."/>
            <person name="Fouts D.E."/>
            <person name="Eisen J.A."/>
            <person name="Gill S.R."/>
            <person name="Holtzapple E.K."/>
            <person name="Okstad O.A."/>
            <person name="Helgason E."/>
            <person name="Rilstone J."/>
            <person name="Wu M."/>
            <person name="Kolonay J.F."/>
            <person name="Beanan M.J."/>
            <person name="Dodson R.J."/>
            <person name="Brinkac L.M."/>
            <person name="Gwinn M.L."/>
            <person name="DeBoy R.T."/>
            <person name="Madpu R."/>
            <person name="Daugherty S.C."/>
            <person name="Durkin A.S."/>
            <person name="Haft D.H."/>
            <person name="Nelson W.C."/>
            <person name="Peterson J.D."/>
            <person name="Pop M."/>
            <person name="Khouri H.M."/>
            <person name="Radune D."/>
            <person name="Benton J.L."/>
            <person name="Mahamoud Y."/>
            <person name="Jiang L."/>
            <person name="Hance I.R."/>
            <person name="Weidman J.F."/>
            <person name="Berry K.J."/>
            <person name="Plaut R.D."/>
            <person name="Wolf A.M."/>
            <person name="Watkins K.L."/>
            <person name="Nierman W.C."/>
            <person name="Hazen A."/>
            <person name="Cline R.T."/>
            <person name="Redmond C."/>
            <person name="Thwaite J.E."/>
            <person name="White O."/>
            <person name="Salzberg S.L."/>
            <person name="Thomason B."/>
            <person name="Friedlander A.M."/>
            <person name="Koehler T.M."/>
            <person name="Hanna P.C."/>
            <person name="Kolstoe A.-B."/>
            <person name="Fraser C.M."/>
        </authorList>
    </citation>
    <scope>NUCLEOTIDE SEQUENCE [LARGE SCALE GENOMIC DNA]</scope>
    <source>
        <strain>Ames / isolate Porton</strain>
    </source>
</reference>
<reference key="2">
    <citation type="submission" date="2004-01" db="EMBL/GenBank/DDBJ databases">
        <title>Complete genome sequence of Bacillus anthracis Sterne.</title>
        <authorList>
            <person name="Brettin T.S."/>
            <person name="Bruce D."/>
            <person name="Challacombe J.F."/>
            <person name="Gilna P."/>
            <person name="Han C."/>
            <person name="Hill K."/>
            <person name="Hitchcock P."/>
            <person name="Jackson P."/>
            <person name="Keim P."/>
            <person name="Longmire J."/>
            <person name="Lucas S."/>
            <person name="Okinaka R."/>
            <person name="Richardson P."/>
            <person name="Rubin E."/>
            <person name="Tice H."/>
        </authorList>
    </citation>
    <scope>NUCLEOTIDE SEQUENCE [LARGE SCALE GENOMIC DNA]</scope>
    <source>
        <strain>Sterne</strain>
    </source>
</reference>
<reference key="3">
    <citation type="journal article" date="2009" name="J. Bacteriol.">
        <title>The complete genome sequence of Bacillus anthracis Ames 'Ancestor'.</title>
        <authorList>
            <person name="Ravel J."/>
            <person name="Jiang L."/>
            <person name="Stanley S.T."/>
            <person name="Wilson M.R."/>
            <person name="Decker R.S."/>
            <person name="Read T.D."/>
            <person name="Worsham P."/>
            <person name="Keim P.S."/>
            <person name="Salzberg S.L."/>
            <person name="Fraser-Liggett C.M."/>
            <person name="Rasko D.A."/>
        </authorList>
    </citation>
    <scope>NUCLEOTIDE SEQUENCE [LARGE SCALE GENOMIC DNA]</scope>
    <source>
        <strain>Ames ancestor</strain>
    </source>
</reference>
<reference key="4">
    <citation type="journal article" date="2007" name="Biochemistry">
        <title>Structure of the type III pantothenate kinase from Bacillus anthracis at 2.0 A resolution: implications for coenzyme A-dependent redox biology.</title>
        <authorList>
            <person name="Nicely N.I."/>
            <person name="Parsonage D."/>
            <person name="Paige C."/>
            <person name="Newton G.L."/>
            <person name="Fahey R.C."/>
            <person name="Leonardi R."/>
            <person name="Jackowski S."/>
            <person name="Mallett T.C."/>
            <person name="Claiborne A."/>
        </authorList>
    </citation>
    <scope>X-RAY CRYSTALLOGRAPHY (2.0 ANGSTROMS)</scope>
    <scope>SUBUNIT</scope>
</reference>
<name>COAX_BACAN</name>
<keyword id="KW-0002">3D-structure</keyword>
<keyword id="KW-0067">ATP-binding</keyword>
<keyword id="KW-0173">Coenzyme A biosynthesis</keyword>
<keyword id="KW-0963">Cytoplasm</keyword>
<keyword id="KW-0418">Kinase</keyword>
<keyword id="KW-0479">Metal-binding</keyword>
<keyword id="KW-0547">Nucleotide-binding</keyword>
<keyword id="KW-0630">Potassium</keyword>
<keyword id="KW-1185">Reference proteome</keyword>
<keyword id="KW-0808">Transferase</keyword>
<protein>
    <recommendedName>
        <fullName evidence="1">Type III pantothenate kinase</fullName>
        <ecNumber evidence="1">2.7.1.33</ecNumber>
    </recommendedName>
    <alternativeName>
        <fullName evidence="1">PanK-III</fullName>
    </alternativeName>
    <alternativeName>
        <fullName evidence="1">Pantothenic acid kinase</fullName>
    </alternativeName>
</protein>
<feature type="chain" id="PRO_0000267491" description="Type III pantothenate kinase">
    <location>
        <begin position="1"/>
        <end position="262"/>
    </location>
</feature>
<feature type="active site" description="Proton acceptor" evidence="1">
    <location>
        <position position="109"/>
    </location>
</feature>
<feature type="binding site" evidence="1">
    <location>
        <begin position="6"/>
        <end position="13"/>
    </location>
    <ligand>
        <name>ATP</name>
        <dbReference type="ChEBI" id="CHEBI:30616"/>
    </ligand>
</feature>
<feature type="binding site" evidence="1">
    <location>
        <position position="100"/>
    </location>
    <ligand>
        <name>substrate</name>
    </ligand>
</feature>
<feature type="binding site" evidence="1">
    <location>
        <begin position="107"/>
        <end position="110"/>
    </location>
    <ligand>
        <name>substrate</name>
    </ligand>
</feature>
<feature type="binding site" evidence="1">
    <location>
        <position position="129"/>
    </location>
    <ligand>
        <name>K(+)</name>
        <dbReference type="ChEBI" id="CHEBI:29103"/>
    </ligand>
</feature>
<feature type="binding site" evidence="1">
    <location>
        <position position="132"/>
    </location>
    <ligand>
        <name>ATP</name>
        <dbReference type="ChEBI" id="CHEBI:30616"/>
    </ligand>
</feature>
<feature type="binding site" evidence="1">
    <location>
        <position position="184"/>
    </location>
    <ligand>
        <name>substrate</name>
    </ligand>
</feature>
<feature type="strand" evidence="3">
    <location>
        <begin position="2"/>
        <end position="7"/>
    </location>
</feature>
<feature type="strand" evidence="3">
    <location>
        <begin position="9"/>
        <end position="18"/>
    </location>
</feature>
<feature type="strand" evidence="3">
    <location>
        <begin position="21"/>
        <end position="29"/>
    </location>
</feature>
<feature type="helix" evidence="3">
    <location>
        <begin position="36"/>
        <end position="49"/>
    </location>
</feature>
<feature type="helix" evidence="3">
    <location>
        <begin position="54"/>
        <end position="56"/>
    </location>
</feature>
<feature type="strand" evidence="3">
    <location>
        <begin position="59"/>
        <end position="65"/>
    </location>
</feature>
<feature type="helix" evidence="3">
    <location>
        <begin position="67"/>
        <end position="80"/>
    </location>
</feature>
<feature type="helix" evidence="3">
    <location>
        <begin position="103"/>
        <end position="105"/>
    </location>
</feature>
<feature type="helix" evidence="3">
    <location>
        <begin position="108"/>
        <end position="121"/>
    </location>
</feature>
<feature type="strand" evidence="3">
    <location>
        <begin position="123"/>
        <end position="139"/>
    </location>
</feature>
<feature type="strand" evidence="3">
    <location>
        <begin position="143"/>
        <end position="152"/>
    </location>
</feature>
<feature type="helix" evidence="3">
    <location>
        <begin position="154"/>
        <end position="162"/>
    </location>
</feature>
<feature type="helix" evidence="3">
    <location>
        <begin position="184"/>
        <end position="210"/>
    </location>
</feature>
<feature type="strand" evidence="3">
    <location>
        <begin position="216"/>
        <end position="221"/>
    </location>
</feature>
<feature type="helix" evidence="3">
    <location>
        <begin position="224"/>
        <end position="230"/>
    </location>
</feature>
<feature type="strand" evidence="3">
    <location>
        <begin position="235"/>
        <end position="237"/>
    </location>
</feature>
<feature type="helix" evidence="3">
    <location>
        <begin position="241"/>
        <end position="252"/>
    </location>
</feature>
<organism>
    <name type="scientific">Bacillus anthracis</name>
    <dbReference type="NCBI Taxonomy" id="1392"/>
    <lineage>
        <taxon>Bacteria</taxon>
        <taxon>Bacillati</taxon>
        <taxon>Bacillota</taxon>
        <taxon>Bacilli</taxon>
        <taxon>Bacillales</taxon>
        <taxon>Bacillaceae</taxon>
        <taxon>Bacillus</taxon>
        <taxon>Bacillus cereus group</taxon>
    </lineage>
</organism>
<proteinExistence type="evidence at protein level"/>
<evidence type="ECO:0000255" key="1">
    <source>
        <dbReference type="HAMAP-Rule" id="MF_01274"/>
    </source>
</evidence>
<evidence type="ECO:0000269" key="2">
    <source>
    </source>
</evidence>
<evidence type="ECO:0007829" key="3">
    <source>
        <dbReference type="PDB" id="2H3G"/>
    </source>
</evidence>
<sequence length="262" mass="29094">MIFVLDVGNTNAVLGVFEEGELRQHWRMETDRHKTEDEYGMLVKQLLEHEGLSFEDVKGIIVSSVVPPIMFALERMCEKYFKIKPLVVGPGIKTGLNIKYENPREVGADRIVNAVAGIHLYGSPLIIVDFGTATTYCYINEEKHYMGGVITPGIMISAEALYSRAAKLPRIEITKPSSVVGKNTVSAMQSGILYGYVGQVEGIVKRMKEEAKQEPKVIATGGLAKLISEESNVIDVVDPFLTLKGLYMLYERNANLQHEKGE</sequence>
<comment type="function">
    <text evidence="1">Catalyzes the phosphorylation of pantothenate (Pan), the first step in CoA biosynthesis.</text>
</comment>
<comment type="catalytic activity">
    <reaction evidence="1">
        <text>(R)-pantothenate + ATP = (R)-4'-phosphopantothenate + ADP + H(+)</text>
        <dbReference type="Rhea" id="RHEA:16373"/>
        <dbReference type="ChEBI" id="CHEBI:10986"/>
        <dbReference type="ChEBI" id="CHEBI:15378"/>
        <dbReference type="ChEBI" id="CHEBI:29032"/>
        <dbReference type="ChEBI" id="CHEBI:30616"/>
        <dbReference type="ChEBI" id="CHEBI:456216"/>
        <dbReference type="EC" id="2.7.1.33"/>
    </reaction>
</comment>
<comment type="cofactor">
    <cofactor evidence="1">
        <name>NH4(+)</name>
        <dbReference type="ChEBI" id="CHEBI:28938"/>
    </cofactor>
    <cofactor evidence="1">
        <name>K(+)</name>
        <dbReference type="ChEBI" id="CHEBI:29103"/>
    </cofactor>
    <text evidence="1">A monovalent cation. Ammonium or potassium.</text>
</comment>
<comment type="pathway">
    <text evidence="1">Cofactor biosynthesis; coenzyme A biosynthesis; CoA from (R)-pantothenate: step 1/5.</text>
</comment>
<comment type="subunit">
    <text evidence="1 2">Homodimer.</text>
</comment>
<comment type="subcellular location">
    <subcellularLocation>
        <location evidence="1">Cytoplasm</location>
    </subcellularLocation>
</comment>
<comment type="similarity">
    <text evidence="1">Belongs to the type III pantothenate kinase family.</text>
</comment>
<gene>
    <name evidence="1" type="primary">coaX</name>
    <name type="ordered locus">BA_0065</name>
    <name type="ordered locus">GBAA_0065</name>
    <name type="ordered locus">BAS0065</name>
</gene>
<accession>Q81VX4</accession>
<accession>Q6I4X8</accession>
<accession>Q6KYM2</accession>
<dbReference type="EC" id="2.7.1.33" evidence="1"/>
<dbReference type="EMBL" id="AE016879">
    <property type="protein sequence ID" value="AAP24120.1"/>
    <property type="molecule type" value="Genomic_DNA"/>
</dbReference>
<dbReference type="EMBL" id="AE017225">
    <property type="protein sequence ID" value="AAT52403.1"/>
    <property type="molecule type" value="Genomic_DNA"/>
</dbReference>
<dbReference type="EMBL" id="AE017334">
    <property type="protein sequence ID" value="AAT29143.2"/>
    <property type="molecule type" value="Genomic_DNA"/>
</dbReference>
<dbReference type="RefSeq" id="NP_842634.1">
    <property type="nucleotide sequence ID" value="NC_003997.3"/>
</dbReference>
<dbReference type="RefSeq" id="WP_000578367.1">
    <property type="nucleotide sequence ID" value="NZ_WXXJ01000031.1"/>
</dbReference>
<dbReference type="RefSeq" id="YP_026352.1">
    <property type="nucleotide sequence ID" value="NC_005945.1"/>
</dbReference>
<dbReference type="PDB" id="2H3G">
    <property type="method" value="X-ray"/>
    <property type="resolution" value="2.00 A"/>
    <property type="chains" value="X=1-262"/>
</dbReference>
<dbReference type="PDBsum" id="2H3G"/>
<dbReference type="SMR" id="Q81VX4"/>
<dbReference type="IntAct" id="Q81VX4">
    <property type="interactions" value="1"/>
</dbReference>
<dbReference type="STRING" id="261594.GBAA_0065"/>
<dbReference type="BindingDB" id="Q81VX4"/>
<dbReference type="ChEMBL" id="CHEMBL4295616"/>
<dbReference type="DNASU" id="1086632"/>
<dbReference type="KEGG" id="ban:BA_0065"/>
<dbReference type="KEGG" id="bar:GBAA_0065"/>
<dbReference type="KEGG" id="bat:BAS0065"/>
<dbReference type="PATRIC" id="fig|198094.11.peg.62"/>
<dbReference type="eggNOG" id="COG1521">
    <property type="taxonomic scope" value="Bacteria"/>
</dbReference>
<dbReference type="HOGENOM" id="CLU_066627_1_0_9"/>
<dbReference type="OMA" id="HEPWLTL"/>
<dbReference type="OrthoDB" id="9804707at2"/>
<dbReference type="BRENDA" id="2.7.1.33">
    <property type="organism ID" value="634"/>
</dbReference>
<dbReference type="UniPathway" id="UPA00241">
    <property type="reaction ID" value="UER00352"/>
</dbReference>
<dbReference type="EvolutionaryTrace" id="Q81VX4"/>
<dbReference type="Proteomes" id="UP000000427">
    <property type="component" value="Chromosome"/>
</dbReference>
<dbReference type="Proteomes" id="UP000000594">
    <property type="component" value="Chromosome"/>
</dbReference>
<dbReference type="GO" id="GO:0005737">
    <property type="term" value="C:cytoplasm"/>
    <property type="evidence" value="ECO:0007669"/>
    <property type="project" value="UniProtKB-SubCell"/>
</dbReference>
<dbReference type="GO" id="GO:0005524">
    <property type="term" value="F:ATP binding"/>
    <property type="evidence" value="ECO:0007669"/>
    <property type="project" value="UniProtKB-UniRule"/>
</dbReference>
<dbReference type="GO" id="GO:0046872">
    <property type="term" value="F:metal ion binding"/>
    <property type="evidence" value="ECO:0007669"/>
    <property type="project" value="UniProtKB-KW"/>
</dbReference>
<dbReference type="GO" id="GO:0004594">
    <property type="term" value="F:pantothenate kinase activity"/>
    <property type="evidence" value="ECO:0007669"/>
    <property type="project" value="UniProtKB-UniRule"/>
</dbReference>
<dbReference type="GO" id="GO:0015937">
    <property type="term" value="P:coenzyme A biosynthetic process"/>
    <property type="evidence" value="ECO:0007669"/>
    <property type="project" value="UniProtKB-UniRule"/>
</dbReference>
<dbReference type="CDD" id="cd24015">
    <property type="entry name" value="ASKHA_NBD_PanK-III"/>
    <property type="match status" value="1"/>
</dbReference>
<dbReference type="Gene3D" id="3.30.420.40">
    <property type="match status" value="2"/>
</dbReference>
<dbReference type="HAMAP" id="MF_01274">
    <property type="entry name" value="Pantothen_kinase_3"/>
    <property type="match status" value="1"/>
</dbReference>
<dbReference type="InterPro" id="IPR043129">
    <property type="entry name" value="ATPase_NBD"/>
</dbReference>
<dbReference type="InterPro" id="IPR004619">
    <property type="entry name" value="Type_III_PanK"/>
</dbReference>
<dbReference type="NCBIfam" id="TIGR00671">
    <property type="entry name" value="baf"/>
    <property type="match status" value="1"/>
</dbReference>
<dbReference type="NCBIfam" id="NF009843">
    <property type="entry name" value="PRK13318.1-1"/>
    <property type="match status" value="1"/>
</dbReference>
<dbReference type="NCBIfam" id="NF009847">
    <property type="entry name" value="PRK13318.1-5"/>
    <property type="match status" value="1"/>
</dbReference>
<dbReference type="NCBIfam" id="NF009848">
    <property type="entry name" value="PRK13318.1-6"/>
    <property type="match status" value="1"/>
</dbReference>
<dbReference type="NCBIfam" id="NF009855">
    <property type="entry name" value="PRK13321.1"/>
    <property type="match status" value="1"/>
</dbReference>
<dbReference type="PANTHER" id="PTHR34265">
    <property type="entry name" value="TYPE III PANTOTHENATE KINASE"/>
    <property type="match status" value="1"/>
</dbReference>
<dbReference type="PANTHER" id="PTHR34265:SF1">
    <property type="entry name" value="TYPE III PANTOTHENATE KINASE"/>
    <property type="match status" value="1"/>
</dbReference>
<dbReference type="Pfam" id="PF03309">
    <property type="entry name" value="Pan_kinase"/>
    <property type="match status" value="1"/>
</dbReference>
<dbReference type="SUPFAM" id="SSF53067">
    <property type="entry name" value="Actin-like ATPase domain"/>
    <property type="match status" value="2"/>
</dbReference>